<evidence type="ECO:0000255" key="1">
    <source>
        <dbReference type="HAMAP-Rule" id="MF_00033"/>
    </source>
</evidence>
<organism>
    <name type="scientific">Pseudoalteromonas atlantica (strain T6c / ATCC BAA-1087)</name>
    <dbReference type="NCBI Taxonomy" id="3042615"/>
    <lineage>
        <taxon>Bacteria</taxon>
        <taxon>Pseudomonadati</taxon>
        <taxon>Pseudomonadota</taxon>
        <taxon>Gammaproteobacteria</taxon>
        <taxon>Alteromonadales</taxon>
        <taxon>Alteromonadaceae</taxon>
        <taxon>Paraglaciecola</taxon>
    </lineage>
</organism>
<sequence>MSNRIASDSVMTHTLLVMAGGTGGHVFPGLAVAQALKEQNWHIHWLGTAQRMEADLVPKAGFEISFIDIAGVRGNGLVRLLAAPFKIIKAVIQARGVIKQVKPDVVIGMGGFASGPGGVAAWLMGKPLVLHEQNAAPGMTNRLLARIANKVLTGFAGTFDAQKTADRQGQDVSDSAKYQWVGNPVRAGFATIMPKQISGISRATNVLILGGSLGAKALNENVPLALAKQNEIKVRHQCGKGHLDSVTQLYQNQLGDSGDWQVDEFVEDMPQAYQWADLVICRAGALTVAEVAASGVAAIFVPLPHAVDDHQTKNAQTLVEHEAGYLLAQNELVQGGLTSLLEACLAQPNMLVEMGNKARKLARLDAVQRVTHCCQLLVEKAQ</sequence>
<comment type="function">
    <text evidence="1">Cell wall formation. Catalyzes the transfer of a GlcNAc subunit on undecaprenyl-pyrophosphoryl-MurNAc-pentapeptide (lipid intermediate I) to form undecaprenyl-pyrophosphoryl-MurNAc-(pentapeptide)GlcNAc (lipid intermediate II).</text>
</comment>
<comment type="catalytic activity">
    <reaction evidence="1">
        <text>di-trans,octa-cis-undecaprenyl diphospho-N-acetyl-alpha-D-muramoyl-L-alanyl-D-glutamyl-meso-2,6-diaminopimeloyl-D-alanyl-D-alanine + UDP-N-acetyl-alpha-D-glucosamine = di-trans,octa-cis-undecaprenyl diphospho-[N-acetyl-alpha-D-glucosaminyl-(1-&gt;4)]-N-acetyl-alpha-D-muramoyl-L-alanyl-D-glutamyl-meso-2,6-diaminopimeloyl-D-alanyl-D-alanine + UDP + H(+)</text>
        <dbReference type="Rhea" id="RHEA:31227"/>
        <dbReference type="ChEBI" id="CHEBI:15378"/>
        <dbReference type="ChEBI" id="CHEBI:57705"/>
        <dbReference type="ChEBI" id="CHEBI:58223"/>
        <dbReference type="ChEBI" id="CHEBI:61387"/>
        <dbReference type="ChEBI" id="CHEBI:61388"/>
        <dbReference type="EC" id="2.4.1.227"/>
    </reaction>
</comment>
<comment type="pathway">
    <text evidence="1">Cell wall biogenesis; peptidoglycan biosynthesis.</text>
</comment>
<comment type="subcellular location">
    <subcellularLocation>
        <location evidence="1">Cell inner membrane</location>
        <topology evidence="1">Peripheral membrane protein</topology>
        <orientation evidence="1">Cytoplasmic side</orientation>
    </subcellularLocation>
</comment>
<comment type="similarity">
    <text evidence="1">Belongs to the glycosyltransferase 28 family. MurG subfamily.</text>
</comment>
<dbReference type="EC" id="2.4.1.227" evidence="1"/>
<dbReference type="EMBL" id="CP000388">
    <property type="protein sequence ID" value="ABG42021.1"/>
    <property type="molecule type" value="Genomic_DNA"/>
</dbReference>
<dbReference type="RefSeq" id="WP_011576249.1">
    <property type="nucleotide sequence ID" value="NC_008228.1"/>
</dbReference>
<dbReference type="SMR" id="Q15Q17"/>
<dbReference type="STRING" id="342610.Patl_3519"/>
<dbReference type="CAZy" id="GT28">
    <property type="family name" value="Glycosyltransferase Family 28"/>
</dbReference>
<dbReference type="KEGG" id="pat:Patl_3519"/>
<dbReference type="eggNOG" id="COG0707">
    <property type="taxonomic scope" value="Bacteria"/>
</dbReference>
<dbReference type="HOGENOM" id="CLU_037404_2_0_6"/>
<dbReference type="OrthoDB" id="9808936at2"/>
<dbReference type="UniPathway" id="UPA00219"/>
<dbReference type="Proteomes" id="UP000001981">
    <property type="component" value="Chromosome"/>
</dbReference>
<dbReference type="GO" id="GO:0005886">
    <property type="term" value="C:plasma membrane"/>
    <property type="evidence" value="ECO:0007669"/>
    <property type="project" value="UniProtKB-SubCell"/>
</dbReference>
<dbReference type="GO" id="GO:0051991">
    <property type="term" value="F:UDP-N-acetyl-D-glucosamine:N-acetylmuramoyl-L-alanyl-D-glutamyl-meso-2,6-diaminopimelyl-D-alanyl-D-alanine-diphosphoundecaprenol 4-beta-N-acetylglucosaminlytransferase activity"/>
    <property type="evidence" value="ECO:0007669"/>
    <property type="project" value="RHEA"/>
</dbReference>
<dbReference type="GO" id="GO:0050511">
    <property type="term" value="F:undecaprenyldiphospho-muramoylpentapeptide beta-N-acetylglucosaminyltransferase activity"/>
    <property type="evidence" value="ECO:0007669"/>
    <property type="project" value="UniProtKB-UniRule"/>
</dbReference>
<dbReference type="GO" id="GO:0005975">
    <property type="term" value="P:carbohydrate metabolic process"/>
    <property type="evidence" value="ECO:0007669"/>
    <property type="project" value="InterPro"/>
</dbReference>
<dbReference type="GO" id="GO:0051301">
    <property type="term" value="P:cell division"/>
    <property type="evidence" value="ECO:0007669"/>
    <property type="project" value="UniProtKB-KW"/>
</dbReference>
<dbReference type="GO" id="GO:0071555">
    <property type="term" value="P:cell wall organization"/>
    <property type="evidence" value="ECO:0007669"/>
    <property type="project" value="UniProtKB-KW"/>
</dbReference>
<dbReference type="GO" id="GO:0030259">
    <property type="term" value="P:lipid glycosylation"/>
    <property type="evidence" value="ECO:0007669"/>
    <property type="project" value="UniProtKB-UniRule"/>
</dbReference>
<dbReference type="GO" id="GO:0009252">
    <property type="term" value="P:peptidoglycan biosynthetic process"/>
    <property type="evidence" value="ECO:0007669"/>
    <property type="project" value="UniProtKB-UniRule"/>
</dbReference>
<dbReference type="GO" id="GO:0008360">
    <property type="term" value="P:regulation of cell shape"/>
    <property type="evidence" value="ECO:0007669"/>
    <property type="project" value="UniProtKB-KW"/>
</dbReference>
<dbReference type="CDD" id="cd03785">
    <property type="entry name" value="GT28_MurG"/>
    <property type="match status" value="1"/>
</dbReference>
<dbReference type="Gene3D" id="3.40.50.2000">
    <property type="entry name" value="Glycogen Phosphorylase B"/>
    <property type="match status" value="2"/>
</dbReference>
<dbReference type="HAMAP" id="MF_00033">
    <property type="entry name" value="MurG"/>
    <property type="match status" value="1"/>
</dbReference>
<dbReference type="InterPro" id="IPR006009">
    <property type="entry name" value="GlcNAc_MurG"/>
</dbReference>
<dbReference type="InterPro" id="IPR007235">
    <property type="entry name" value="Glyco_trans_28_C"/>
</dbReference>
<dbReference type="InterPro" id="IPR004276">
    <property type="entry name" value="GlycoTrans_28_N"/>
</dbReference>
<dbReference type="NCBIfam" id="TIGR01133">
    <property type="entry name" value="murG"/>
    <property type="match status" value="1"/>
</dbReference>
<dbReference type="PANTHER" id="PTHR21015:SF22">
    <property type="entry name" value="GLYCOSYLTRANSFERASE"/>
    <property type="match status" value="1"/>
</dbReference>
<dbReference type="PANTHER" id="PTHR21015">
    <property type="entry name" value="UDP-N-ACETYLGLUCOSAMINE--N-ACETYLMURAMYL-(PENTAPEPTIDE) PYROPHOSPHORYL-UNDECAPRENOL N-ACETYLGLUCOSAMINE TRANSFERASE 1"/>
    <property type="match status" value="1"/>
</dbReference>
<dbReference type="Pfam" id="PF04101">
    <property type="entry name" value="Glyco_tran_28_C"/>
    <property type="match status" value="1"/>
</dbReference>
<dbReference type="Pfam" id="PF03033">
    <property type="entry name" value="Glyco_transf_28"/>
    <property type="match status" value="1"/>
</dbReference>
<dbReference type="SUPFAM" id="SSF53756">
    <property type="entry name" value="UDP-Glycosyltransferase/glycogen phosphorylase"/>
    <property type="match status" value="1"/>
</dbReference>
<feature type="chain" id="PRO_0000315143" description="UDP-N-acetylglucosamine--N-acetylmuramyl-(pentapeptide) pyrophosphoryl-undecaprenol N-acetylglucosamine transferase">
    <location>
        <begin position="1"/>
        <end position="382"/>
    </location>
</feature>
<feature type="binding site" evidence="1">
    <location>
        <begin position="22"/>
        <end position="24"/>
    </location>
    <ligand>
        <name>UDP-N-acetyl-alpha-D-glucosamine</name>
        <dbReference type="ChEBI" id="CHEBI:57705"/>
    </ligand>
</feature>
<feature type="binding site" evidence="1">
    <location>
        <position position="134"/>
    </location>
    <ligand>
        <name>UDP-N-acetyl-alpha-D-glucosamine</name>
        <dbReference type="ChEBI" id="CHEBI:57705"/>
    </ligand>
</feature>
<feature type="binding site" evidence="1">
    <location>
        <position position="186"/>
    </location>
    <ligand>
        <name>UDP-N-acetyl-alpha-D-glucosamine</name>
        <dbReference type="ChEBI" id="CHEBI:57705"/>
    </ligand>
</feature>
<feature type="binding site" evidence="1">
    <location>
        <position position="212"/>
    </location>
    <ligand>
        <name>UDP-N-acetyl-alpha-D-glucosamine</name>
        <dbReference type="ChEBI" id="CHEBI:57705"/>
    </ligand>
</feature>
<feature type="binding site" evidence="1">
    <location>
        <begin position="285"/>
        <end position="290"/>
    </location>
    <ligand>
        <name>UDP-N-acetyl-alpha-D-glucosamine</name>
        <dbReference type="ChEBI" id="CHEBI:57705"/>
    </ligand>
</feature>
<feature type="binding site" evidence="1">
    <location>
        <position position="311"/>
    </location>
    <ligand>
        <name>UDP-N-acetyl-alpha-D-glucosamine</name>
        <dbReference type="ChEBI" id="CHEBI:57705"/>
    </ligand>
</feature>
<keyword id="KW-0131">Cell cycle</keyword>
<keyword id="KW-0132">Cell division</keyword>
<keyword id="KW-0997">Cell inner membrane</keyword>
<keyword id="KW-1003">Cell membrane</keyword>
<keyword id="KW-0133">Cell shape</keyword>
<keyword id="KW-0961">Cell wall biogenesis/degradation</keyword>
<keyword id="KW-0328">Glycosyltransferase</keyword>
<keyword id="KW-0472">Membrane</keyword>
<keyword id="KW-0573">Peptidoglycan synthesis</keyword>
<keyword id="KW-0808">Transferase</keyword>
<accession>Q15Q17</accession>
<protein>
    <recommendedName>
        <fullName evidence="1">UDP-N-acetylglucosamine--N-acetylmuramyl-(pentapeptide) pyrophosphoryl-undecaprenol N-acetylglucosamine transferase</fullName>
        <ecNumber evidence="1">2.4.1.227</ecNumber>
    </recommendedName>
    <alternativeName>
        <fullName evidence="1">Undecaprenyl-PP-MurNAc-pentapeptide-UDPGlcNAc GlcNAc transferase</fullName>
    </alternativeName>
</protein>
<reference key="1">
    <citation type="submission" date="2006-06" db="EMBL/GenBank/DDBJ databases">
        <title>Complete sequence of Pseudoalteromonas atlantica T6c.</title>
        <authorList>
            <consortium name="US DOE Joint Genome Institute"/>
            <person name="Copeland A."/>
            <person name="Lucas S."/>
            <person name="Lapidus A."/>
            <person name="Barry K."/>
            <person name="Detter J.C."/>
            <person name="Glavina del Rio T."/>
            <person name="Hammon N."/>
            <person name="Israni S."/>
            <person name="Dalin E."/>
            <person name="Tice H."/>
            <person name="Pitluck S."/>
            <person name="Saunders E."/>
            <person name="Brettin T."/>
            <person name="Bruce D."/>
            <person name="Han C."/>
            <person name="Tapia R."/>
            <person name="Gilna P."/>
            <person name="Schmutz J."/>
            <person name="Larimer F."/>
            <person name="Land M."/>
            <person name="Hauser L."/>
            <person name="Kyrpides N."/>
            <person name="Kim E."/>
            <person name="Karls A.C."/>
            <person name="Bartlett D."/>
            <person name="Higgins B.P."/>
            <person name="Richardson P."/>
        </authorList>
    </citation>
    <scope>NUCLEOTIDE SEQUENCE [LARGE SCALE GENOMIC DNA]</scope>
    <source>
        <strain>T6c / ATCC BAA-1087</strain>
    </source>
</reference>
<proteinExistence type="inferred from homology"/>
<gene>
    <name evidence="1" type="primary">murG</name>
    <name type="ordered locus">Patl_3519</name>
</gene>
<name>MURG_PSEA6</name>